<sequence length="379" mass="42880">MTNIRKSHPLIKIVNDALIDLPAPSNISSWWNFGSLLGVCLAVQILTGLFLAMHYTSDTATAFNSVTHICRDVNYGWLLRYLHANGASMFFICLYLHVGRGLYYGSYTYTETWNVGIILLFAVMATAFKGYVLPWGQKSFWGATVITNLLSAIPYIGTDLVEWIWGGFSVDKATLTRFFAFHFLLPFIIAAMVMVHLLFLHETGSNNPTGIPSYFDMIPFHPYYTIKDILGFFLMLMALLMLVLFSPDLLGDPDNYIPANPLNTPPHIKPEWYFLFAYAILRSIPNKLGGVLALVLSILILMIVPILHTSKQRSMTFRPLSQCLFWLLVADLLTLTWIGGQPVEHPYIIIGQLASILYFSIILLLMPLTSLMENHLLKW</sequence>
<feature type="chain" id="PRO_0000257929" description="Cytochrome b">
    <location>
        <begin position="1"/>
        <end position="379"/>
    </location>
</feature>
<feature type="transmembrane region" description="Helical" evidence="2">
    <location>
        <begin position="33"/>
        <end position="53"/>
    </location>
</feature>
<feature type="transmembrane region" description="Helical" evidence="2">
    <location>
        <begin position="77"/>
        <end position="98"/>
    </location>
</feature>
<feature type="transmembrane region" description="Helical" evidence="2">
    <location>
        <begin position="113"/>
        <end position="133"/>
    </location>
</feature>
<feature type="transmembrane region" description="Helical" evidence="2">
    <location>
        <begin position="178"/>
        <end position="198"/>
    </location>
</feature>
<feature type="transmembrane region" description="Helical" evidence="2">
    <location>
        <begin position="226"/>
        <end position="246"/>
    </location>
</feature>
<feature type="transmembrane region" description="Helical" evidence="2">
    <location>
        <begin position="288"/>
        <end position="308"/>
    </location>
</feature>
<feature type="transmembrane region" description="Helical" evidence="2">
    <location>
        <begin position="320"/>
        <end position="340"/>
    </location>
</feature>
<feature type="transmembrane region" description="Helical" evidence="2">
    <location>
        <begin position="347"/>
        <end position="367"/>
    </location>
</feature>
<feature type="binding site" description="axial binding residue" evidence="2">
    <location>
        <position position="83"/>
    </location>
    <ligand>
        <name>heme b</name>
        <dbReference type="ChEBI" id="CHEBI:60344"/>
        <label>b562</label>
    </ligand>
    <ligandPart>
        <name>Fe</name>
        <dbReference type="ChEBI" id="CHEBI:18248"/>
    </ligandPart>
</feature>
<feature type="binding site" description="axial binding residue" evidence="2">
    <location>
        <position position="97"/>
    </location>
    <ligand>
        <name>heme b</name>
        <dbReference type="ChEBI" id="CHEBI:60344"/>
        <label>b566</label>
    </ligand>
    <ligandPart>
        <name>Fe</name>
        <dbReference type="ChEBI" id="CHEBI:18248"/>
    </ligandPart>
</feature>
<feature type="binding site" description="axial binding residue" evidence="2">
    <location>
        <position position="182"/>
    </location>
    <ligand>
        <name>heme b</name>
        <dbReference type="ChEBI" id="CHEBI:60344"/>
        <label>b562</label>
    </ligand>
    <ligandPart>
        <name>Fe</name>
        <dbReference type="ChEBI" id="CHEBI:18248"/>
    </ligandPart>
</feature>
<feature type="binding site" description="axial binding residue" evidence="2">
    <location>
        <position position="196"/>
    </location>
    <ligand>
        <name>heme b</name>
        <dbReference type="ChEBI" id="CHEBI:60344"/>
        <label>b566</label>
    </ligand>
    <ligandPart>
        <name>Fe</name>
        <dbReference type="ChEBI" id="CHEBI:18248"/>
    </ligandPart>
</feature>
<feature type="binding site" evidence="2">
    <location>
        <position position="201"/>
    </location>
    <ligand>
        <name>a ubiquinone</name>
        <dbReference type="ChEBI" id="CHEBI:16389"/>
    </ligand>
</feature>
<feature type="sequence variant" description="In strain: Isolate Durban5.">
    <original>T</original>
    <variation>I</variation>
    <location>
        <position position="2"/>
    </location>
</feature>
<feature type="sequence variant" description="In strain: Isolate Durban5.">
    <original>K</original>
    <variation>M</variation>
    <location>
        <position position="129"/>
    </location>
</feature>
<feature type="sequence variant" description="In strain: Isolate Durban5.">
    <original>K</original>
    <variation>M</variation>
    <location>
        <position position="138"/>
    </location>
</feature>
<feature type="sequence variant" description="In strain: Isolate Durban5.">
    <original>F</original>
    <variation>S</variation>
    <location>
        <position position="215"/>
    </location>
</feature>
<organism>
    <name type="scientific">Otomops martiensseni</name>
    <name type="common">Large-eared free-tailed bat</name>
    <dbReference type="NCBI Taxonomy" id="258867"/>
    <lineage>
        <taxon>Eukaryota</taxon>
        <taxon>Metazoa</taxon>
        <taxon>Chordata</taxon>
        <taxon>Craniata</taxon>
        <taxon>Vertebrata</taxon>
        <taxon>Euteleostomi</taxon>
        <taxon>Mammalia</taxon>
        <taxon>Eutheria</taxon>
        <taxon>Laurasiatheria</taxon>
        <taxon>Chiroptera</taxon>
        <taxon>Yangochiroptera</taxon>
        <taxon>Molossidae</taxon>
        <taxon>Otomops</taxon>
    </lineage>
</organism>
<comment type="function">
    <text evidence="2">Component of the ubiquinol-cytochrome c reductase complex (complex III or cytochrome b-c1 complex) that is part of the mitochondrial respiratory chain. The b-c1 complex mediates electron transfer from ubiquinol to cytochrome c. Contributes to the generation of a proton gradient across the mitochondrial membrane that is then used for ATP synthesis.</text>
</comment>
<comment type="cofactor">
    <cofactor evidence="2">
        <name>heme b</name>
        <dbReference type="ChEBI" id="CHEBI:60344"/>
    </cofactor>
    <text evidence="2">Binds 2 heme b groups non-covalently.</text>
</comment>
<comment type="subunit">
    <text evidence="2">The cytochrome bc1 complex contains 11 subunits: 3 respiratory subunits (MT-CYB, CYC1 and UQCRFS1), 2 core proteins (UQCRC1 and UQCRC2) and 6 low-molecular weight proteins (UQCRH/QCR6, UQCRB/QCR7, UQCRQ/QCR8, UQCR10/QCR9, UQCR11/QCR10 and a cleavage product of UQCRFS1). This cytochrome bc1 complex then forms a dimer.</text>
</comment>
<comment type="subcellular location">
    <subcellularLocation>
        <location evidence="2">Mitochondrion inner membrane</location>
        <topology evidence="2">Multi-pass membrane protein</topology>
    </subcellularLocation>
</comment>
<comment type="miscellaneous">
    <text evidence="1">Heme 1 (or BL or b562) is low-potential and absorbs at about 562 nm, and heme 2 (or BH or b566) is high-potential and absorbs at about 566 nm.</text>
</comment>
<comment type="similarity">
    <text evidence="3 4">Belongs to the cytochrome b family.</text>
</comment>
<comment type="caution">
    <text evidence="2">The full-length protein contains only eight transmembrane helices, not nine as predicted by bioinformatics tools.</text>
</comment>
<evidence type="ECO:0000250" key="1"/>
<evidence type="ECO:0000250" key="2">
    <source>
        <dbReference type="UniProtKB" id="P00157"/>
    </source>
</evidence>
<evidence type="ECO:0000255" key="3">
    <source>
        <dbReference type="PROSITE-ProRule" id="PRU00967"/>
    </source>
</evidence>
<evidence type="ECO:0000255" key="4">
    <source>
        <dbReference type="PROSITE-ProRule" id="PRU00968"/>
    </source>
</evidence>
<keyword id="KW-0249">Electron transport</keyword>
<keyword id="KW-0349">Heme</keyword>
<keyword id="KW-0408">Iron</keyword>
<keyword id="KW-0472">Membrane</keyword>
<keyword id="KW-0479">Metal-binding</keyword>
<keyword id="KW-0496">Mitochondrion</keyword>
<keyword id="KW-0999">Mitochondrion inner membrane</keyword>
<keyword id="KW-0679">Respiratory chain</keyword>
<keyword id="KW-0812">Transmembrane</keyword>
<keyword id="KW-1133">Transmembrane helix</keyword>
<keyword id="KW-0813">Transport</keyword>
<keyword id="KW-0830">Ubiquinone</keyword>
<gene>
    <name type="primary">MT-CYB</name>
    <name type="synonym">COB</name>
    <name type="synonym">CYTB</name>
    <name type="synonym">MTCYB</name>
</gene>
<geneLocation type="mitochondrion"/>
<reference key="1">
    <citation type="submission" date="2004-04" db="EMBL/GenBank/DDBJ databases">
        <title>Molecular phylogeography of Otomops martiensseni (Chiroptera: Molossidae) from Kenya and South Africa.</title>
        <authorList>
            <person name="Rahman E.H."/>
            <person name="Lamb J.M."/>
            <person name="Taylor P.J."/>
            <person name="Fenton B.M."/>
            <person name="Naidoo A."/>
            <person name="Richardson E.J."/>
            <person name="Jacobs D.S."/>
            <person name="Milne A."/>
            <person name="Denys C."/>
        </authorList>
    </citation>
    <scope>NUCLEOTIDE SEQUENCE [GENOMIC DNA]</scope>
    <source>
        <strain>Isolate Durban3</strain>
        <strain>Isolate Durban5</strain>
    </source>
</reference>
<accession>Q5YBK0</accession>
<accession>Q5YBJ9</accession>
<dbReference type="EMBL" id="AY591534">
    <property type="protein sequence ID" value="AAU89103.1"/>
    <property type="molecule type" value="Genomic_DNA"/>
</dbReference>
<dbReference type="EMBL" id="AY591536">
    <property type="protein sequence ID" value="AAU89104.1"/>
    <property type="molecule type" value="Genomic_DNA"/>
</dbReference>
<dbReference type="SMR" id="Q5YBK0"/>
<dbReference type="GO" id="GO:0005743">
    <property type="term" value="C:mitochondrial inner membrane"/>
    <property type="evidence" value="ECO:0007669"/>
    <property type="project" value="UniProtKB-SubCell"/>
</dbReference>
<dbReference type="GO" id="GO:0045275">
    <property type="term" value="C:respiratory chain complex III"/>
    <property type="evidence" value="ECO:0007669"/>
    <property type="project" value="InterPro"/>
</dbReference>
<dbReference type="GO" id="GO:0046872">
    <property type="term" value="F:metal ion binding"/>
    <property type="evidence" value="ECO:0007669"/>
    <property type="project" value="UniProtKB-KW"/>
</dbReference>
<dbReference type="GO" id="GO:0008121">
    <property type="term" value="F:ubiquinol-cytochrome-c reductase activity"/>
    <property type="evidence" value="ECO:0007669"/>
    <property type="project" value="InterPro"/>
</dbReference>
<dbReference type="GO" id="GO:0006122">
    <property type="term" value="P:mitochondrial electron transport, ubiquinol to cytochrome c"/>
    <property type="evidence" value="ECO:0007669"/>
    <property type="project" value="TreeGrafter"/>
</dbReference>
<dbReference type="CDD" id="cd00290">
    <property type="entry name" value="cytochrome_b_C"/>
    <property type="match status" value="1"/>
</dbReference>
<dbReference type="CDD" id="cd00284">
    <property type="entry name" value="Cytochrome_b_N"/>
    <property type="match status" value="1"/>
</dbReference>
<dbReference type="FunFam" id="1.20.810.10:FF:000002">
    <property type="entry name" value="Cytochrome b"/>
    <property type="match status" value="1"/>
</dbReference>
<dbReference type="Gene3D" id="1.20.810.10">
    <property type="entry name" value="Cytochrome Bc1 Complex, Chain C"/>
    <property type="match status" value="1"/>
</dbReference>
<dbReference type="InterPro" id="IPR005798">
    <property type="entry name" value="Cyt_b/b6_C"/>
</dbReference>
<dbReference type="InterPro" id="IPR036150">
    <property type="entry name" value="Cyt_b/b6_C_sf"/>
</dbReference>
<dbReference type="InterPro" id="IPR005797">
    <property type="entry name" value="Cyt_b/b6_N"/>
</dbReference>
<dbReference type="InterPro" id="IPR027387">
    <property type="entry name" value="Cytb/b6-like_sf"/>
</dbReference>
<dbReference type="InterPro" id="IPR030689">
    <property type="entry name" value="Cytochrome_b"/>
</dbReference>
<dbReference type="InterPro" id="IPR048260">
    <property type="entry name" value="Cytochrome_b_C_euk/bac"/>
</dbReference>
<dbReference type="InterPro" id="IPR048259">
    <property type="entry name" value="Cytochrome_b_N_euk/bac"/>
</dbReference>
<dbReference type="InterPro" id="IPR016174">
    <property type="entry name" value="Di-haem_cyt_TM"/>
</dbReference>
<dbReference type="PANTHER" id="PTHR19271">
    <property type="entry name" value="CYTOCHROME B"/>
    <property type="match status" value="1"/>
</dbReference>
<dbReference type="PANTHER" id="PTHR19271:SF16">
    <property type="entry name" value="CYTOCHROME B"/>
    <property type="match status" value="1"/>
</dbReference>
<dbReference type="Pfam" id="PF00032">
    <property type="entry name" value="Cytochrom_B_C"/>
    <property type="match status" value="1"/>
</dbReference>
<dbReference type="Pfam" id="PF00033">
    <property type="entry name" value="Cytochrome_B"/>
    <property type="match status" value="1"/>
</dbReference>
<dbReference type="PIRSF" id="PIRSF038885">
    <property type="entry name" value="COB"/>
    <property type="match status" value="1"/>
</dbReference>
<dbReference type="SUPFAM" id="SSF81648">
    <property type="entry name" value="a domain/subunit of cytochrome bc1 complex (Ubiquinol-cytochrome c reductase)"/>
    <property type="match status" value="1"/>
</dbReference>
<dbReference type="SUPFAM" id="SSF81342">
    <property type="entry name" value="Transmembrane di-heme cytochromes"/>
    <property type="match status" value="1"/>
</dbReference>
<dbReference type="PROSITE" id="PS51003">
    <property type="entry name" value="CYTB_CTER"/>
    <property type="match status" value="1"/>
</dbReference>
<dbReference type="PROSITE" id="PS51002">
    <property type="entry name" value="CYTB_NTER"/>
    <property type="match status" value="1"/>
</dbReference>
<name>CYB_OTOMR</name>
<protein>
    <recommendedName>
        <fullName>Cytochrome b</fullName>
    </recommendedName>
    <alternativeName>
        <fullName>Complex III subunit 3</fullName>
    </alternativeName>
    <alternativeName>
        <fullName>Complex III subunit III</fullName>
    </alternativeName>
    <alternativeName>
        <fullName>Cytochrome b-c1 complex subunit 3</fullName>
    </alternativeName>
    <alternativeName>
        <fullName>Ubiquinol-cytochrome-c reductase complex cytochrome b subunit</fullName>
    </alternativeName>
</protein>
<proteinExistence type="inferred from homology"/>